<name>DNAA_SHESW</name>
<keyword id="KW-0067">ATP-binding</keyword>
<keyword id="KW-0963">Cytoplasm</keyword>
<keyword id="KW-0235">DNA replication</keyword>
<keyword id="KW-0238">DNA-binding</keyword>
<keyword id="KW-0446">Lipid-binding</keyword>
<keyword id="KW-0547">Nucleotide-binding</keyword>
<organism>
    <name type="scientific">Shewanella sp. (strain W3-18-1)</name>
    <dbReference type="NCBI Taxonomy" id="351745"/>
    <lineage>
        <taxon>Bacteria</taxon>
        <taxon>Pseudomonadati</taxon>
        <taxon>Pseudomonadota</taxon>
        <taxon>Gammaproteobacteria</taxon>
        <taxon>Alteromonadales</taxon>
        <taxon>Shewanellaceae</taxon>
        <taxon>Shewanella</taxon>
    </lineage>
</organism>
<proteinExistence type="inferred from homology"/>
<feature type="chain" id="PRO_1000048725" description="Chromosomal replication initiator protein DnaA">
    <location>
        <begin position="1"/>
        <end position="461"/>
    </location>
</feature>
<feature type="region of interest" description="Domain I, interacts with DnaA modulators" evidence="1">
    <location>
        <begin position="1"/>
        <end position="84"/>
    </location>
</feature>
<feature type="region of interest" description="Domain II" evidence="1">
    <location>
        <begin position="84"/>
        <end position="124"/>
    </location>
</feature>
<feature type="region of interest" description="Domain III, AAA+ region" evidence="1">
    <location>
        <begin position="125"/>
        <end position="341"/>
    </location>
</feature>
<feature type="region of interest" description="Domain IV, binds dsDNA" evidence="1">
    <location>
        <begin position="342"/>
        <end position="461"/>
    </location>
</feature>
<feature type="binding site" evidence="1">
    <location>
        <position position="169"/>
    </location>
    <ligand>
        <name>ATP</name>
        <dbReference type="ChEBI" id="CHEBI:30616"/>
    </ligand>
</feature>
<feature type="binding site" evidence="1">
    <location>
        <position position="171"/>
    </location>
    <ligand>
        <name>ATP</name>
        <dbReference type="ChEBI" id="CHEBI:30616"/>
    </ligand>
</feature>
<feature type="binding site" evidence="1">
    <location>
        <position position="172"/>
    </location>
    <ligand>
        <name>ATP</name>
        <dbReference type="ChEBI" id="CHEBI:30616"/>
    </ligand>
</feature>
<feature type="binding site" evidence="1">
    <location>
        <position position="173"/>
    </location>
    <ligand>
        <name>ATP</name>
        <dbReference type="ChEBI" id="CHEBI:30616"/>
    </ligand>
</feature>
<sequence length="461" mass="52238">MAVSLWQQCIGRLQDELPAQQFSMWIRPLQAEMDGDTLVLYAPNRFVLDWVREKYINIINQFFTEQMGSDAPKLRFDIGSRPSAKKFEPAPVATVRAPNTQTKATVGTYFNTQAEPIANANHRSNINPTYQFDNFVEGKSNQLGKAAALQVAENPGGAYNPLFLYGGTGLGKTHLLHAVGNGIIKNNPNAKVVYMHSERFVQDMVKALQNNAIEEFKRYYRSVDALFIDDIQFFANKDRSQEEFFHTFNALLEGNHQIILTSDRYPKEIDGVEDRLKSRFGWGLTVAIEPPELETRVAILMRKAQESGINLPDEVAFFIAKRLRSNVRELEGALNRVIANANFTGRPITIDFVREALRDLLALQEKLVTIDNIQKTVAEYYKIKMADMLSKRRSRSVARPRQVAMALSKELTNQSLPEIGDAFGGRDHTTVLHACRKIAQLREESHDIKEDYANLIRTLSS</sequence>
<accession>A1RDX7</accession>
<reference key="1">
    <citation type="submission" date="2006-12" db="EMBL/GenBank/DDBJ databases">
        <title>Complete sequence of Shewanella sp. W3-18-1.</title>
        <authorList>
            <consortium name="US DOE Joint Genome Institute"/>
            <person name="Copeland A."/>
            <person name="Lucas S."/>
            <person name="Lapidus A."/>
            <person name="Barry K."/>
            <person name="Detter J.C."/>
            <person name="Glavina del Rio T."/>
            <person name="Hammon N."/>
            <person name="Israni S."/>
            <person name="Dalin E."/>
            <person name="Tice H."/>
            <person name="Pitluck S."/>
            <person name="Chain P."/>
            <person name="Malfatti S."/>
            <person name="Shin M."/>
            <person name="Vergez L."/>
            <person name="Schmutz J."/>
            <person name="Larimer F."/>
            <person name="Land M."/>
            <person name="Hauser L."/>
            <person name="Kyrpides N."/>
            <person name="Lykidis A."/>
            <person name="Tiedje J."/>
            <person name="Richardson P."/>
        </authorList>
    </citation>
    <scope>NUCLEOTIDE SEQUENCE [LARGE SCALE GENOMIC DNA]</scope>
    <source>
        <strain>W3-18-1</strain>
    </source>
</reference>
<gene>
    <name evidence="1" type="primary">dnaA</name>
    <name type="ordered locus">Sputw3181_0001</name>
</gene>
<protein>
    <recommendedName>
        <fullName evidence="1">Chromosomal replication initiator protein DnaA</fullName>
    </recommendedName>
</protein>
<evidence type="ECO:0000255" key="1">
    <source>
        <dbReference type="HAMAP-Rule" id="MF_00377"/>
    </source>
</evidence>
<dbReference type="EMBL" id="CP000503">
    <property type="protein sequence ID" value="ABM22854.1"/>
    <property type="molecule type" value="Genomic_DNA"/>
</dbReference>
<dbReference type="RefSeq" id="WP_011787424.1">
    <property type="nucleotide sequence ID" value="NC_008750.1"/>
</dbReference>
<dbReference type="SMR" id="A1RDX7"/>
<dbReference type="GeneID" id="67441593"/>
<dbReference type="KEGG" id="shw:Sputw3181_0001"/>
<dbReference type="HOGENOM" id="CLU_026910_0_1_6"/>
<dbReference type="Proteomes" id="UP000002597">
    <property type="component" value="Chromosome"/>
</dbReference>
<dbReference type="GO" id="GO:0005737">
    <property type="term" value="C:cytoplasm"/>
    <property type="evidence" value="ECO:0007669"/>
    <property type="project" value="UniProtKB-SubCell"/>
</dbReference>
<dbReference type="GO" id="GO:0005886">
    <property type="term" value="C:plasma membrane"/>
    <property type="evidence" value="ECO:0007669"/>
    <property type="project" value="TreeGrafter"/>
</dbReference>
<dbReference type="GO" id="GO:0005524">
    <property type="term" value="F:ATP binding"/>
    <property type="evidence" value="ECO:0007669"/>
    <property type="project" value="UniProtKB-UniRule"/>
</dbReference>
<dbReference type="GO" id="GO:0016887">
    <property type="term" value="F:ATP hydrolysis activity"/>
    <property type="evidence" value="ECO:0007669"/>
    <property type="project" value="InterPro"/>
</dbReference>
<dbReference type="GO" id="GO:0003688">
    <property type="term" value="F:DNA replication origin binding"/>
    <property type="evidence" value="ECO:0007669"/>
    <property type="project" value="UniProtKB-UniRule"/>
</dbReference>
<dbReference type="GO" id="GO:0008289">
    <property type="term" value="F:lipid binding"/>
    <property type="evidence" value="ECO:0007669"/>
    <property type="project" value="UniProtKB-KW"/>
</dbReference>
<dbReference type="GO" id="GO:0006270">
    <property type="term" value="P:DNA replication initiation"/>
    <property type="evidence" value="ECO:0007669"/>
    <property type="project" value="UniProtKB-UniRule"/>
</dbReference>
<dbReference type="GO" id="GO:0006275">
    <property type="term" value="P:regulation of DNA replication"/>
    <property type="evidence" value="ECO:0007669"/>
    <property type="project" value="UniProtKB-UniRule"/>
</dbReference>
<dbReference type="CDD" id="cd00009">
    <property type="entry name" value="AAA"/>
    <property type="match status" value="1"/>
</dbReference>
<dbReference type="CDD" id="cd06571">
    <property type="entry name" value="Bac_DnaA_C"/>
    <property type="match status" value="1"/>
</dbReference>
<dbReference type="FunFam" id="1.10.1750.10:FF:000001">
    <property type="entry name" value="Chromosomal replication initiator protein DnaA"/>
    <property type="match status" value="1"/>
</dbReference>
<dbReference type="FunFam" id="1.10.8.60:FF:000003">
    <property type="entry name" value="Chromosomal replication initiator protein DnaA"/>
    <property type="match status" value="1"/>
</dbReference>
<dbReference type="FunFam" id="3.30.300.180:FF:000001">
    <property type="entry name" value="Chromosomal replication initiator protein DnaA"/>
    <property type="match status" value="1"/>
</dbReference>
<dbReference type="FunFam" id="3.40.50.300:FF:000103">
    <property type="entry name" value="Chromosomal replication initiator protein DnaA"/>
    <property type="match status" value="1"/>
</dbReference>
<dbReference type="Gene3D" id="1.10.1750.10">
    <property type="match status" value="1"/>
</dbReference>
<dbReference type="Gene3D" id="1.10.8.60">
    <property type="match status" value="1"/>
</dbReference>
<dbReference type="Gene3D" id="3.30.300.180">
    <property type="match status" value="1"/>
</dbReference>
<dbReference type="Gene3D" id="3.40.50.300">
    <property type="entry name" value="P-loop containing nucleotide triphosphate hydrolases"/>
    <property type="match status" value="1"/>
</dbReference>
<dbReference type="HAMAP" id="MF_00377">
    <property type="entry name" value="DnaA_bact"/>
    <property type="match status" value="1"/>
</dbReference>
<dbReference type="InterPro" id="IPR003593">
    <property type="entry name" value="AAA+_ATPase"/>
</dbReference>
<dbReference type="InterPro" id="IPR001957">
    <property type="entry name" value="Chromosome_initiator_DnaA"/>
</dbReference>
<dbReference type="InterPro" id="IPR020591">
    <property type="entry name" value="Chromosome_initiator_DnaA-like"/>
</dbReference>
<dbReference type="InterPro" id="IPR018312">
    <property type="entry name" value="Chromosome_initiator_DnaA_CS"/>
</dbReference>
<dbReference type="InterPro" id="IPR013159">
    <property type="entry name" value="DnaA_C"/>
</dbReference>
<dbReference type="InterPro" id="IPR013317">
    <property type="entry name" value="DnaA_dom"/>
</dbReference>
<dbReference type="InterPro" id="IPR024633">
    <property type="entry name" value="DnaA_N_dom"/>
</dbReference>
<dbReference type="InterPro" id="IPR038454">
    <property type="entry name" value="DnaA_N_sf"/>
</dbReference>
<dbReference type="InterPro" id="IPR055199">
    <property type="entry name" value="Hda_lid"/>
</dbReference>
<dbReference type="InterPro" id="IPR027417">
    <property type="entry name" value="P-loop_NTPase"/>
</dbReference>
<dbReference type="InterPro" id="IPR010921">
    <property type="entry name" value="Trp_repressor/repl_initiator"/>
</dbReference>
<dbReference type="NCBIfam" id="TIGR00362">
    <property type="entry name" value="DnaA"/>
    <property type="match status" value="1"/>
</dbReference>
<dbReference type="PANTHER" id="PTHR30050">
    <property type="entry name" value="CHROMOSOMAL REPLICATION INITIATOR PROTEIN DNAA"/>
    <property type="match status" value="1"/>
</dbReference>
<dbReference type="PANTHER" id="PTHR30050:SF2">
    <property type="entry name" value="CHROMOSOMAL REPLICATION INITIATOR PROTEIN DNAA"/>
    <property type="match status" value="1"/>
</dbReference>
<dbReference type="Pfam" id="PF00308">
    <property type="entry name" value="Bac_DnaA"/>
    <property type="match status" value="1"/>
</dbReference>
<dbReference type="Pfam" id="PF08299">
    <property type="entry name" value="Bac_DnaA_C"/>
    <property type="match status" value="1"/>
</dbReference>
<dbReference type="Pfam" id="PF11638">
    <property type="entry name" value="DnaA_N"/>
    <property type="match status" value="1"/>
</dbReference>
<dbReference type="Pfam" id="PF22688">
    <property type="entry name" value="Hda_lid"/>
    <property type="match status" value="1"/>
</dbReference>
<dbReference type="PRINTS" id="PR00051">
    <property type="entry name" value="DNAA"/>
</dbReference>
<dbReference type="SMART" id="SM00382">
    <property type="entry name" value="AAA"/>
    <property type="match status" value="1"/>
</dbReference>
<dbReference type="SMART" id="SM00760">
    <property type="entry name" value="Bac_DnaA_C"/>
    <property type="match status" value="1"/>
</dbReference>
<dbReference type="SUPFAM" id="SSF52540">
    <property type="entry name" value="P-loop containing nucleoside triphosphate hydrolases"/>
    <property type="match status" value="1"/>
</dbReference>
<dbReference type="SUPFAM" id="SSF48295">
    <property type="entry name" value="TrpR-like"/>
    <property type="match status" value="1"/>
</dbReference>
<dbReference type="PROSITE" id="PS01008">
    <property type="entry name" value="DNAA"/>
    <property type="match status" value="1"/>
</dbReference>
<comment type="function">
    <text evidence="1">Plays an essential role in the initiation and regulation of chromosomal replication. ATP-DnaA binds to the origin of replication (oriC) to initiate formation of the DNA replication initiation complex once per cell cycle. Binds the DnaA box (a 9 base pair repeat at the origin) and separates the double-stranded (ds)DNA. Forms a right-handed helical filament on oriC DNA; dsDNA binds to the exterior of the filament while single-stranded (ss)DNA is stabiized in the filament's interior. The ATP-DnaA-oriC complex binds and stabilizes one strand of the AT-rich DNA unwinding element (DUE), permitting loading of DNA polymerase. After initiation quickly degrades to an ADP-DnaA complex that is not apt for DNA replication. Binds acidic phospholipids.</text>
</comment>
<comment type="subunit">
    <text evidence="1">Oligomerizes as a right-handed, spiral filament on DNA at oriC.</text>
</comment>
<comment type="subcellular location">
    <subcellularLocation>
        <location evidence="1">Cytoplasm</location>
    </subcellularLocation>
</comment>
<comment type="domain">
    <text evidence="1">Domain I is involved in oligomerization and binding regulators, domain II is flexibile and of varying length in different bacteria, domain III forms the AAA+ region, while domain IV binds dsDNA.</text>
</comment>
<comment type="similarity">
    <text evidence="1">Belongs to the DnaA family.</text>
</comment>